<gene>
    <name evidence="7" type="primary">msald</name>
</gene>
<name>MSAL2_VARPD</name>
<proteinExistence type="evidence at protein level"/>
<evidence type="ECO:0000250" key="1">
    <source>
        <dbReference type="UniProtKB" id="B2DEV5"/>
    </source>
</evidence>
<evidence type="ECO:0000250" key="2">
    <source>
        <dbReference type="UniProtKB" id="B2DEW1"/>
    </source>
</evidence>
<evidence type="ECO:0000250" key="3">
    <source>
        <dbReference type="UniProtKB" id="P0A825"/>
    </source>
</evidence>
<evidence type="ECO:0000269" key="4">
    <source>
    </source>
</evidence>
<evidence type="ECO:0000303" key="5">
    <source>
    </source>
</evidence>
<evidence type="ECO:0000305" key="6"/>
<evidence type="ECO:0000312" key="7">
    <source>
        <dbReference type="EMBL" id="BAG31013.1"/>
    </source>
</evidence>
<feature type="chain" id="PRO_0000461466" description="Alpha-methylserine aldolase">
    <location>
        <begin position="1"/>
        <end position="440"/>
    </location>
</feature>
<feature type="modified residue" description="N6-(pyridoxal phosphate)lysine" evidence="3">
    <location>
        <position position="255"/>
    </location>
</feature>
<keyword id="KW-0456">Lyase</keyword>
<keyword id="KW-0663">Pyridoxal phosphate</keyword>
<accession>B2DEW0</accession>
<sequence>MPAALQRRSWVPAASEDHVLAIAADAAARDALGIAAEIERLADDNHRIHDREGLNLNPATNVMNPAAEALLSRGLGSRASLGYPGDKYEVGLEAIERIEVIAAELAAEVFGSKFAEVRVSSGALSNLYVFMATCRPGDTIIAPPPAIGGHVTHHAAGAAGLYGLKTVPAPVDADGYTVDAAALARLAREVKPKLITIGGSLNLFPHPVPAIREVADSVGAKLLFDAAHLSGMVAGKAWPQPLEEGAHAITMSTYKSLGGPAGGLIVSNDAALMERIDAIAYPGLTANSDAGRTAALARGLLDWKVHGRAYAAAMRETAQALAHALDAEGLPVFAKARGFTQSHQFALEAAHWGGGQRAAKKLAEGGLLACGIGLPIAPVEGDINGLRLGVPEIVRLGFTPDDMPQLASWIARALEGGGASVAAEVRERRTRLGGLRYIVR</sequence>
<dbReference type="EC" id="4.1.2.-" evidence="4"/>
<dbReference type="EMBL" id="AB426474">
    <property type="protein sequence ID" value="BAG31013.1"/>
    <property type="molecule type" value="Genomic_DNA"/>
</dbReference>
<dbReference type="SMR" id="B2DEW0"/>
<dbReference type="GO" id="GO:0005737">
    <property type="term" value="C:cytoplasm"/>
    <property type="evidence" value="ECO:0007669"/>
    <property type="project" value="TreeGrafter"/>
</dbReference>
<dbReference type="GO" id="GO:0004372">
    <property type="term" value="F:glycine hydroxymethyltransferase activity"/>
    <property type="evidence" value="ECO:0007669"/>
    <property type="project" value="InterPro"/>
</dbReference>
<dbReference type="GO" id="GO:0016829">
    <property type="term" value="F:lyase activity"/>
    <property type="evidence" value="ECO:0007669"/>
    <property type="project" value="UniProtKB-KW"/>
</dbReference>
<dbReference type="GO" id="GO:0030170">
    <property type="term" value="F:pyridoxal phosphate binding"/>
    <property type="evidence" value="ECO:0007669"/>
    <property type="project" value="InterPro"/>
</dbReference>
<dbReference type="GO" id="GO:0019264">
    <property type="term" value="P:glycine biosynthetic process from serine"/>
    <property type="evidence" value="ECO:0007669"/>
    <property type="project" value="InterPro"/>
</dbReference>
<dbReference type="GO" id="GO:0035999">
    <property type="term" value="P:tetrahydrofolate interconversion"/>
    <property type="evidence" value="ECO:0007669"/>
    <property type="project" value="InterPro"/>
</dbReference>
<dbReference type="Gene3D" id="3.90.1150.10">
    <property type="entry name" value="Aspartate Aminotransferase, domain 1"/>
    <property type="match status" value="1"/>
</dbReference>
<dbReference type="Gene3D" id="3.40.640.10">
    <property type="entry name" value="Type I PLP-dependent aspartate aminotransferase-like (Major domain)"/>
    <property type="match status" value="1"/>
</dbReference>
<dbReference type="InterPro" id="IPR015424">
    <property type="entry name" value="PyrdxlP-dep_Trfase"/>
</dbReference>
<dbReference type="InterPro" id="IPR015421">
    <property type="entry name" value="PyrdxlP-dep_Trfase_major"/>
</dbReference>
<dbReference type="InterPro" id="IPR015422">
    <property type="entry name" value="PyrdxlP-dep_Trfase_small"/>
</dbReference>
<dbReference type="InterPro" id="IPR001085">
    <property type="entry name" value="Ser_HO-MeTrfase"/>
</dbReference>
<dbReference type="InterPro" id="IPR049943">
    <property type="entry name" value="Ser_HO-MeTrfase-like"/>
</dbReference>
<dbReference type="InterPro" id="IPR039429">
    <property type="entry name" value="SHMT-like_dom"/>
</dbReference>
<dbReference type="PANTHER" id="PTHR11680">
    <property type="entry name" value="SERINE HYDROXYMETHYLTRANSFERASE"/>
    <property type="match status" value="1"/>
</dbReference>
<dbReference type="PANTHER" id="PTHR11680:SF35">
    <property type="entry name" value="SERINE HYDROXYMETHYLTRANSFERASE 1"/>
    <property type="match status" value="1"/>
</dbReference>
<dbReference type="Pfam" id="PF00464">
    <property type="entry name" value="SHMT"/>
    <property type="match status" value="1"/>
</dbReference>
<dbReference type="PIRSF" id="PIRSF000412">
    <property type="entry name" value="SHMT"/>
    <property type="match status" value="1"/>
</dbReference>
<dbReference type="SUPFAM" id="SSF53383">
    <property type="entry name" value="PLP-dependent transferases"/>
    <property type="match status" value="1"/>
</dbReference>
<protein>
    <recommendedName>
        <fullName evidence="5">Alpha-methylserine aldolase</fullName>
        <ecNumber evidence="4">4.1.2.-</ecNumber>
    </recommendedName>
</protein>
<organism>
    <name type="scientific">Variovorax paradoxus</name>
    <dbReference type="NCBI Taxonomy" id="34073"/>
    <lineage>
        <taxon>Bacteria</taxon>
        <taxon>Pseudomonadati</taxon>
        <taxon>Pseudomonadota</taxon>
        <taxon>Betaproteobacteria</taxon>
        <taxon>Burkholderiales</taxon>
        <taxon>Comamonadaceae</taxon>
        <taxon>Variovorax</taxon>
    </lineage>
</organism>
<comment type="function">
    <text evidence="4">Catalyzes the reversible interconversion of alpha-methyl-L-serine to L-alanine and formaldehyde.</text>
</comment>
<comment type="catalytic activity">
    <reaction evidence="4">
        <text>2-methyl-L-serine = formaldehyde + L-alanine</text>
        <dbReference type="Rhea" id="RHEA:64164"/>
        <dbReference type="ChEBI" id="CHEBI:16842"/>
        <dbReference type="ChEBI" id="CHEBI:57972"/>
        <dbReference type="ChEBI" id="CHEBI:149759"/>
    </reaction>
</comment>
<comment type="cofactor">
    <cofactor evidence="2">
        <name>pyridoxal 5'-phosphate</name>
        <dbReference type="ChEBI" id="CHEBI:597326"/>
    </cofactor>
</comment>
<comment type="subunit">
    <text evidence="1">Homodimer.</text>
</comment>
<comment type="similarity">
    <text evidence="6">Belongs to the SHMT family. Alpha-methylserine aldolase subfamily.</text>
</comment>
<reference evidence="7" key="1">
    <citation type="journal article" date="2008" name="Biosci. Biotechnol. Biochem.">
        <title>Gene cloning of alpha-methylserine aldolase from Variovorax paradoxus and purification and characterization of the recombinant enzyme.</title>
        <authorList>
            <person name="Nozaki H."/>
            <person name="Kuroda S."/>
            <person name="Watanabe K."/>
            <person name="Yokozeki K."/>
        </authorList>
    </citation>
    <scope>NUCLEOTIDE SEQUENCE [GENOMIC DNA]</scope>
    <scope>FUNCTION</scope>
    <scope>CATALYTIC ACTIVITY</scope>
    <source>
        <strain>NBRC 15149</strain>
    </source>
</reference>